<reference key="1">
    <citation type="submission" date="2004-02" db="EMBL/GenBank/DDBJ databases">
        <title>Molecular cloning, expression, phylogenetic and functional characterization of the Arabidopsis AP2/EREBP transcription factor family.</title>
        <authorList>
            <person name="Pan Y."/>
            <person name="Gong W."/>
            <person name="Liu D."/>
            <person name="Fu Q."/>
            <person name="Mei W.-Q."/>
            <person name="Song W.-Q."/>
            <person name="Ma L.-G."/>
            <person name="Luo J.-C."/>
            <person name="Deng X.-W."/>
            <person name="Zhu Y.-X."/>
        </authorList>
    </citation>
    <scope>NUCLEOTIDE SEQUENCE [MRNA]</scope>
</reference>
<reference key="2">
    <citation type="journal article" date="2000" name="Nature">
        <title>Sequence and analysis of chromosome 5 of the plant Arabidopsis thaliana.</title>
        <authorList>
            <person name="Tabata S."/>
            <person name="Kaneko T."/>
            <person name="Nakamura Y."/>
            <person name="Kotani H."/>
            <person name="Kato T."/>
            <person name="Asamizu E."/>
            <person name="Miyajima N."/>
            <person name="Sasamoto S."/>
            <person name="Kimura T."/>
            <person name="Hosouchi T."/>
            <person name="Kawashima K."/>
            <person name="Kohara M."/>
            <person name="Matsumoto M."/>
            <person name="Matsuno A."/>
            <person name="Muraki A."/>
            <person name="Nakayama S."/>
            <person name="Nakazaki N."/>
            <person name="Naruo K."/>
            <person name="Okumura S."/>
            <person name="Shinpo S."/>
            <person name="Takeuchi C."/>
            <person name="Wada T."/>
            <person name="Watanabe A."/>
            <person name="Yamada M."/>
            <person name="Yasuda M."/>
            <person name="Sato S."/>
            <person name="de la Bastide M."/>
            <person name="Huang E."/>
            <person name="Spiegel L."/>
            <person name="Gnoj L."/>
            <person name="O'Shaughnessy A."/>
            <person name="Preston R."/>
            <person name="Habermann K."/>
            <person name="Murray J."/>
            <person name="Johnson D."/>
            <person name="Rohlfing T."/>
            <person name="Nelson J."/>
            <person name="Stoneking T."/>
            <person name="Pepin K."/>
            <person name="Spieth J."/>
            <person name="Sekhon M."/>
            <person name="Armstrong J."/>
            <person name="Becker M."/>
            <person name="Belter E."/>
            <person name="Cordum H."/>
            <person name="Cordes M."/>
            <person name="Courtney L."/>
            <person name="Courtney W."/>
            <person name="Dante M."/>
            <person name="Du H."/>
            <person name="Edwards J."/>
            <person name="Fryman J."/>
            <person name="Haakensen B."/>
            <person name="Lamar E."/>
            <person name="Latreille P."/>
            <person name="Leonard S."/>
            <person name="Meyer R."/>
            <person name="Mulvaney E."/>
            <person name="Ozersky P."/>
            <person name="Riley A."/>
            <person name="Strowmatt C."/>
            <person name="Wagner-McPherson C."/>
            <person name="Wollam A."/>
            <person name="Yoakum M."/>
            <person name="Bell M."/>
            <person name="Dedhia N."/>
            <person name="Parnell L."/>
            <person name="Shah R."/>
            <person name="Rodriguez M."/>
            <person name="Hoon See L."/>
            <person name="Vil D."/>
            <person name="Baker J."/>
            <person name="Kirchoff K."/>
            <person name="Toth K."/>
            <person name="King L."/>
            <person name="Bahret A."/>
            <person name="Miller B."/>
            <person name="Marra M.A."/>
            <person name="Martienssen R."/>
            <person name="McCombie W.R."/>
            <person name="Wilson R.K."/>
            <person name="Murphy G."/>
            <person name="Bancroft I."/>
            <person name="Volckaert G."/>
            <person name="Wambutt R."/>
            <person name="Duesterhoeft A."/>
            <person name="Stiekema W."/>
            <person name="Pohl T."/>
            <person name="Entian K.-D."/>
            <person name="Terryn N."/>
            <person name="Hartley N."/>
            <person name="Bent E."/>
            <person name="Johnson S."/>
            <person name="Langham S.-A."/>
            <person name="McCullagh B."/>
            <person name="Robben J."/>
            <person name="Grymonprez B."/>
            <person name="Zimmermann W."/>
            <person name="Ramsperger U."/>
            <person name="Wedler H."/>
            <person name="Balke K."/>
            <person name="Wedler E."/>
            <person name="Peters S."/>
            <person name="van Staveren M."/>
            <person name="Dirkse W."/>
            <person name="Mooijman P."/>
            <person name="Klein Lankhorst R."/>
            <person name="Weitzenegger T."/>
            <person name="Bothe G."/>
            <person name="Rose M."/>
            <person name="Hauf J."/>
            <person name="Berneiser S."/>
            <person name="Hempel S."/>
            <person name="Feldpausch M."/>
            <person name="Lamberth S."/>
            <person name="Villarroel R."/>
            <person name="Gielen J."/>
            <person name="Ardiles W."/>
            <person name="Bents O."/>
            <person name="Lemcke K."/>
            <person name="Kolesov G."/>
            <person name="Mayer K.F.X."/>
            <person name="Rudd S."/>
            <person name="Schoof H."/>
            <person name="Schueller C."/>
            <person name="Zaccaria P."/>
            <person name="Mewes H.-W."/>
            <person name="Bevan M."/>
            <person name="Fransz P.F."/>
        </authorList>
    </citation>
    <scope>NUCLEOTIDE SEQUENCE [LARGE SCALE GENOMIC DNA]</scope>
    <source>
        <strain>cv. Columbia</strain>
    </source>
</reference>
<reference key="3">
    <citation type="journal article" date="2017" name="Plant J.">
        <title>Araport11: a complete reannotation of the Arabidopsis thaliana reference genome.</title>
        <authorList>
            <person name="Cheng C.Y."/>
            <person name="Krishnakumar V."/>
            <person name="Chan A.P."/>
            <person name="Thibaud-Nissen F."/>
            <person name="Schobel S."/>
            <person name="Town C.D."/>
        </authorList>
    </citation>
    <scope>GENOME REANNOTATION</scope>
    <source>
        <strain>cv. Columbia</strain>
    </source>
</reference>
<reference key="4">
    <citation type="submission" date="2004-03" db="EMBL/GenBank/DDBJ databases">
        <title>Arabidopsis ORF clones.</title>
        <authorList>
            <person name="Cheuk R.F."/>
            <person name="Chen H."/>
            <person name="Kim C.J."/>
            <person name="Shinn P."/>
            <person name="Ecker J.R."/>
        </authorList>
    </citation>
    <scope>NUCLEOTIDE SEQUENCE [LARGE SCALE MRNA]</scope>
    <source>
        <strain>cv. Columbia</strain>
    </source>
</reference>
<reference key="5">
    <citation type="journal article" date="2005" name="Planta">
        <title>Environmental stress alters genes expression and induces ovule abortion: reactive oxygen species appear as ovules commit to abort.</title>
        <authorList>
            <person name="Sun K."/>
            <person name="Cui Y."/>
            <person name="Hauser B.A."/>
        </authorList>
    </citation>
    <scope>INDUCTION BY SALT STRESS</scope>
</reference>
<reference key="6">
    <citation type="journal article" date="2006" name="Plant Physiol.">
        <title>Genome-wide analysis of the ERF gene family in Arabidopsis and rice.</title>
        <authorList>
            <person name="Nakano T."/>
            <person name="Suzuki K."/>
            <person name="Fujimura T."/>
            <person name="Shinshi H."/>
        </authorList>
    </citation>
    <scope>GENE FAMILY</scope>
    <scope>NOMENCLATURE</scope>
</reference>
<reference key="7">
    <citation type="journal article" date="2011" name="Plant Mol. Biol.">
        <title>Functional characterization of four APETALA2-family genes (RAP2.6, RAP2.6L, DREB19 and DREB26) in Arabidopsis.</title>
        <authorList>
            <person name="Krishnaswamy S."/>
            <person name="Verma S."/>
            <person name="Rahman M.H."/>
            <person name="Kav N.N."/>
        </authorList>
    </citation>
    <scope>FUNCTION</scope>
    <scope>TISSUE SPECIFICITY</scope>
    <scope>INDUCTION</scope>
</reference>
<reference key="8">
    <citation type="journal article" date="2011" name="Proc. Natl. Acad. Sci. U.S.A.">
        <title>Spatially selective hormonal control of RAP2.6L and ANAC071 transcription factors involved in tissue reunion in Arabidopsis.</title>
        <authorList>
            <person name="Asahina M."/>
            <person name="Azuma K."/>
            <person name="Pitaksaringkarn W."/>
            <person name="Yamazaki T."/>
            <person name="Mitsuda N."/>
            <person name="Ohme-Takagi M."/>
            <person name="Yamaguchi S."/>
            <person name="Kamiya Y."/>
            <person name="Okada K."/>
            <person name="Nishimura T."/>
            <person name="Koshiba T."/>
            <person name="Yokota T."/>
            <person name="Kamada H."/>
            <person name="Satoh S."/>
        </authorList>
    </citation>
    <scope>FUNCTION</scope>
    <scope>INDUCTION</scope>
</reference>
<reference key="9">
    <citation type="journal article" date="2012" name="Plant Mol. Biol.">
        <title>RAP2.6L overexpression delays waterlogging induced premature senescence by increasing stomatal closure more than antioxidant enzyme activity.</title>
        <authorList>
            <person name="Liu P."/>
            <person name="Sun F."/>
            <person name="Gao R."/>
            <person name="Dong H."/>
        </authorList>
    </citation>
    <scope>FUNCTION</scope>
    <scope>INDUCTION</scope>
</reference>
<proteinExistence type="evidence at transcript level"/>
<protein>
    <recommendedName>
        <fullName>Ethylene-responsive transcription factor ERF113</fullName>
    </recommendedName>
    <alternativeName>
        <fullName evidence="9">Protein RELATED TO AP2 6L</fullName>
    </alternativeName>
</protein>
<dbReference type="EMBL" id="AY560861">
    <property type="protein sequence ID" value="AAT44928.1"/>
    <property type="molecule type" value="mRNA"/>
</dbReference>
<dbReference type="EMBL" id="AL163491">
    <property type="protein sequence ID" value="CAB86640.1"/>
    <property type="molecule type" value="Genomic_DNA"/>
</dbReference>
<dbReference type="EMBL" id="CP002688">
    <property type="protein sequence ID" value="AED91881.1"/>
    <property type="molecule type" value="Genomic_DNA"/>
</dbReference>
<dbReference type="EMBL" id="BT011609">
    <property type="protein sequence ID" value="AAS47615.1"/>
    <property type="molecule type" value="mRNA"/>
</dbReference>
<dbReference type="EMBL" id="BT012250">
    <property type="protein sequence ID" value="AAS76737.1"/>
    <property type="molecule type" value="mRNA"/>
</dbReference>
<dbReference type="PIR" id="T48580">
    <property type="entry name" value="T48580"/>
</dbReference>
<dbReference type="SMR" id="Q9LYU3"/>
<dbReference type="BioGRID" id="16452">
    <property type="interactions" value="7"/>
</dbReference>
<dbReference type="FunCoup" id="Q9LYU3">
    <property type="interactions" value="176"/>
</dbReference>
<dbReference type="IntAct" id="Q9LYU3">
    <property type="interactions" value="8"/>
</dbReference>
<dbReference type="STRING" id="3702.Q9LYU3"/>
<dbReference type="PaxDb" id="3702-AT5G13330.1"/>
<dbReference type="ProteomicsDB" id="247071"/>
<dbReference type="EnsemblPlants" id="AT5G13330.1">
    <property type="protein sequence ID" value="AT5G13330.1"/>
    <property type="gene ID" value="AT5G13330"/>
</dbReference>
<dbReference type="Gramene" id="AT5G13330.1">
    <property type="protein sequence ID" value="AT5G13330.1"/>
    <property type="gene ID" value="AT5G13330"/>
</dbReference>
<dbReference type="KEGG" id="ath:AT5G13330"/>
<dbReference type="Araport" id="AT5G13330"/>
<dbReference type="TAIR" id="AT5G13330">
    <property type="gene designation" value="RAP2.6L"/>
</dbReference>
<dbReference type="eggNOG" id="ENOG502RZR5">
    <property type="taxonomic scope" value="Eukaryota"/>
</dbReference>
<dbReference type="HOGENOM" id="CLU_042594_0_0_1"/>
<dbReference type="InParanoid" id="Q9LYU3"/>
<dbReference type="OMA" id="SMAPQPE"/>
<dbReference type="PhylomeDB" id="Q9LYU3"/>
<dbReference type="PRO" id="PR:Q9LYU3"/>
<dbReference type="Proteomes" id="UP000006548">
    <property type="component" value="Chromosome 5"/>
</dbReference>
<dbReference type="ExpressionAtlas" id="Q9LYU3">
    <property type="expression patterns" value="baseline and differential"/>
</dbReference>
<dbReference type="GO" id="GO:0005634">
    <property type="term" value="C:nucleus"/>
    <property type="evidence" value="ECO:0007669"/>
    <property type="project" value="UniProtKB-SubCell"/>
</dbReference>
<dbReference type="GO" id="GO:0003700">
    <property type="term" value="F:DNA-binding transcription factor activity"/>
    <property type="evidence" value="ECO:0000250"/>
    <property type="project" value="TAIR"/>
</dbReference>
<dbReference type="GO" id="GO:0000976">
    <property type="term" value="F:transcription cis-regulatory region binding"/>
    <property type="evidence" value="ECO:0000353"/>
    <property type="project" value="TAIR"/>
</dbReference>
<dbReference type="GO" id="GO:0071497">
    <property type="term" value="P:cellular response to freezing"/>
    <property type="evidence" value="ECO:0000270"/>
    <property type="project" value="TAIR"/>
</dbReference>
<dbReference type="GO" id="GO:0009873">
    <property type="term" value="P:ethylene-activated signaling pathway"/>
    <property type="evidence" value="ECO:0007669"/>
    <property type="project" value="UniProtKB-KW"/>
</dbReference>
<dbReference type="GO" id="GO:0019760">
    <property type="term" value="P:glucosinolate metabolic process"/>
    <property type="evidence" value="ECO:0000315"/>
    <property type="project" value="TAIR"/>
</dbReference>
<dbReference type="GO" id="GO:0045893">
    <property type="term" value="P:positive regulation of DNA-templated transcription"/>
    <property type="evidence" value="ECO:0000314"/>
    <property type="project" value="TAIR"/>
</dbReference>
<dbReference type="GO" id="GO:0009737">
    <property type="term" value="P:response to abscisic acid"/>
    <property type="evidence" value="ECO:0000270"/>
    <property type="project" value="TAIR"/>
</dbReference>
<dbReference type="GO" id="GO:0009723">
    <property type="term" value="P:response to ethylene"/>
    <property type="evidence" value="ECO:0000270"/>
    <property type="project" value="TAIR"/>
</dbReference>
<dbReference type="GO" id="GO:0009753">
    <property type="term" value="P:response to jasmonic acid"/>
    <property type="evidence" value="ECO:0000270"/>
    <property type="project" value="TAIR"/>
</dbReference>
<dbReference type="GO" id="GO:0009751">
    <property type="term" value="P:response to salicylic acid"/>
    <property type="evidence" value="ECO:0000270"/>
    <property type="project" value="TAIR"/>
</dbReference>
<dbReference type="GO" id="GO:0009651">
    <property type="term" value="P:response to salt stress"/>
    <property type="evidence" value="ECO:0000315"/>
    <property type="project" value="TAIR"/>
</dbReference>
<dbReference type="GO" id="GO:0009414">
    <property type="term" value="P:response to water deprivation"/>
    <property type="evidence" value="ECO:0000270"/>
    <property type="project" value="TAIR"/>
</dbReference>
<dbReference type="CDD" id="cd00018">
    <property type="entry name" value="AP2"/>
    <property type="match status" value="1"/>
</dbReference>
<dbReference type="FunFam" id="3.30.730.10:FF:000001">
    <property type="entry name" value="Ethylene-responsive transcription factor 2"/>
    <property type="match status" value="1"/>
</dbReference>
<dbReference type="Gene3D" id="3.30.730.10">
    <property type="entry name" value="AP2/ERF domain"/>
    <property type="match status" value="1"/>
</dbReference>
<dbReference type="InterPro" id="IPR001471">
    <property type="entry name" value="AP2/ERF_dom"/>
</dbReference>
<dbReference type="InterPro" id="IPR036955">
    <property type="entry name" value="AP2/ERF_dom_sf"/>
</dbReference>
<dbReference type="InterPro" id="IPR016177">
    <property type="entry name" value="DNA-bd_dom_sf"/>
</dbReference>
<dbReference type="InterPro" id="IPR044808">
    <property type="entry name" value="ERF_plant"/>
</dbReference>
<dbReference type="PANTHER" id="PTHR31190">
    <property type="entry name" value="DNA-BINDING DOMAIN"/>
    <property type="match status" value="1"/>
</dbReference>
<dbReference type="PANTHER" id="PTHR31190:SF489">
    <property type="entry name" value="ETHYLENE-RESPONSIVE TRANSCRIPTION FACTOR ERF113-RELATED"/>
    <property type="match status" value="1"/>
</dbReference>
<dbReference type="Pfam" id="PF00847">
    <property type="entry name" value="AP2"/>
    <property type="match status" value="1"/>
</dbReference>
<dbReference type="PRINTS" id="PR00367">
    <property type="entry name" value="ETHRSPELEMNT"/>
</dbReference>
<dbReference type="SMART" id="SM00380">
    <property type="entry name" value="AP2"/>
    <property type="match status" value="1"/>
</dbReference>
<dbReference type="SUPFAM" id="SSF54171">
    <property type="entry name" value="DNA-binding domain"/>
    <property type="match status" value="1"/>
</dbReference>
<dbReference type="PROSITE" id="PS51032">
    <property type="entry name" value="AP2_ERF"/>
    <property type="match status" value="1"/>
</dbReference>
<evidence type="ECO:0000250" key="1"/>
<evidence type="ECO:0000255" key="2">
    <source>
        <dbReference type="PROSITE-ProRule" id="PRU00366"/>
    </source>
</evidence>
<evidence type="ECO:0000256" key="3">
    <source>
        <dbReference type="SAM" id="MobiDB-lite"/>
    </source>
</evidence>
<evidence type="ECO:0000269" key="4">
    <source>
    </source>
</evidence>
<evidence type="ECO:0000269" key="5">
    <source>
    </source>
</evidence>
<evidence type="ECO:0000269" key="6">
    <source>
    </source>
</evidence>
<evidence type="ECO:0000269" key="7">
    <source>
    </source>
</evidence>
<evidence type="ECO:0000303" key="8">
    <source>
    </source>
</evidence>
<evidence type="ECO:0000305" key="9"/>
<keyword id="KW-0010">Activator</keyword>
<keyword id="KW-0238">DNA-binding</keyword>
<keyword id="KW-0936">Ethylene signaling pathway</keyword>
<keyword id="KW-0539">Nucleus</keyword>
<keyword id="KW-1185">Reference proteome</keyword>
<keyword id="KW-0346">Stress response</keyword>
<keyword id="KW-0804">Transcription</keyword>
<keyword id="KW-0805">Transcription regulation</keyword>
<feature type="chain" id="PRO_0000290424" description="Ethylene-responsive transcription factor ERF113">
    <location>
        <begin position="1"/>
        <end position="212"/>
    </location>
</feature>
<feature type="DNA-binding region" description="AP2/ERF" evidence="2">
    <location>
        <begin position="38"/>
        <end position="95"/>
    </location>
</feature>
<feature type="region of interest" description="Disordered" evidence="3">
    <location>
        <begin position="1"/>
        <end position="49"/>
    </location>
</feature>
<feature type="region of interest" description="Disordered" evidence="3">
    <location>
        <begin position="96"/>
        <end position="136"/>
    </location>
</feature>
<feature type="region of interest" description="Disordered" evidence="3">
    <location>
        <begin position="169"/>
        <end position="212"/>
    </location>
</feature>
<feature type="compositionally biased region" description="Basic and acidic residues" evidence="3">
    <location>
        <begin position="17"/>
        <end position="34"/>
    </location>
</feature>
<feature type="compositionally biased region" description="Low complexity" evidence="3">
    <location>
        <begin position="169"/>
        <end position="193"/>
    </location>
</feature>
<feature type="compositionally biased region" description="Low complexity" evidence="3">
    <location>
        <begin position="202"/>
        <end position="212"/>
    </location>
</feature>
<comment type="function">
    <text evidence="1 5 6 7">Transcriptional activator involved in the regulation of plant development and tolerance to abiotic stresses (PubMed:21069430). Acts as positive regulator of tolerance to waterlogging stress. Delays waterlogging-induced premature senescence by regulating stomatal closure and antioxidant enzyme activity. May function through ABI1-mediated abscisic acid (ABA) signaling pathway (PubMed:22661072). Involved in tissue reunion of wounded inflorescence stems. Required for the division of pith cells in the reunion process, which is dependent on polar-transported auxin and the wound-inducible hormones ethylene and jasmonate (PubMed:21911380). Binds to the GCC-box pathogenesis-related promoter element. May be involved in the regulation of gene expression by stress factors and by components of stress signal transduction pathways (By similarity).</text>
</comment>
<comment type="subcellular location">
    <subcellularLocation>
        <location evidence="2">Nucleus</location>
    </subcellularLocation>
</comment>
<comment type="tissue specificity">
    <text evidence="5">Expressed in pollen grains.</text>
</comment>
<comment type="induction">
    <text evidence="4 5 6">Induced by salt stress (PubMed:16133218, PubMed:21069430). Induced drought stress, jasmonate (JA), salicylic acid (SA), abscisic acid (ABA) and ethylene. Down-regulated by freezing stress (PubMed:21069430). Induced by wounding in the flowering stem (PubMed:21911380). Induced by waterlogging.</text>
</comment>
<comment type="similarity">
    <text evidence="9">Belongs to the AP2/ERF transcription factor family. ERF subfamily.</text>
</comment>
<accession>Q9LYU3</accession>
<sequence>MVSALSRVIENPTDPPVKQELDKSDQHQPDQDQPRRRHYRGVRQRPWGKWAAEIRDPKKAARVWLGTFETAEEAALAYDRAALKFKGTKAKLNFPERVQGPTTTTTISHAPRGVSESMNSPPPRPGPPSTTTTSWPMTYNQDILQYAQLLTSNNEVDLSYYTSTLFSQPFSTPSSSSSSSQQTQQQQLQQQQQQREEEEKNYGYNYYNYPRE</sequence>
<organism>
    <name type="scientific">Arabidopsis thaliana</name>
    <name type="common">Mouse-ear cress</name>
    <dbReference type="NCBI Taxonomy" id="3702"/>
    <lineage>
        <taxon>Eukaryota</taxon>
        <taxon>Viridiplantae</taxon>
        <taxon>Streptophyta</taxon>
        <taxon>Embryophyta</taxon>
        <taxon>Tracheophyta</taxon>
        <taxon>Spermatophyta</taxon>
        <taxon>Magnoliopsida</taxon>
        <taxon>eudicotyledons</taxon>
        <taxon>Gunneridae</taxon>
        <taxon>Pentapetalae</taxon>
        <taxon>rosids</taxon>
        <taxon>malvids</taxon>
        <taxon>Brassicales</taxon>
        <taxon>Brassicaceae</taxon>
        <taxon>Camelineae</taxon>
        <taxon>Arabidopsis</taxon>
    </lineage>
</organism>
<name>EF113_ARATH</name>
<gene>
    <name type="primary">ERF113</name>
    <name evidence="8" type="synonym">RP2.6L</name>
    <name type="ordered locus">At5g13330</name>
    <name type="ORF">T31B5.150</name>
</gene>